<comment type="function">
    <text evidence="2 3">G-protein coupled receptor for 5-hydroxytryptamine (serotonin). Also functions as a receptor for various drugs and psychoactive substances, including mescaline, psilocybin, 1-(2,5-dimethoxy-4-iodophenyl)-2-aminopropane (DOI) and lysergic acid diethylamide (LSD). Ligand binding causes a conformation change that triggers signaling via guanine nucleotide-binding proteins (G proteins) and modulates the activity of downstream effectors. HTR2A is coupled to G(q)/G(11) G alpha proteins and activates phospholipase C-beta, releasing diacylglycerol (DAG) and inositol 1,4,5-trisphosphate (IP3) second messengers that modulate the activity of phosphatidylinositol 3-kinase and promote the release of Ca(2+) ions from intracellular stores, respectively. Beta-arrestin family members inhibit signaling via G proteins and mediate activation of alternative signaling pathways. Affects neural activity, perception, cognition and mood (By similarity). Plays a role in the regulation of behavior, including responses to anxiogenic situations and psychoactive substances. Plays a role in intestinal smooth muscle contraction, and may play a role in arterial vasoconstriction (By similarity).</text>
</comment>
<comment type="activity regulation">
    <text evidence="2">G-protein coupled receptor activity is regulated by lipids: oleamide increases HTR2A-mediated activity.</text>
</comment>
<comment type="subunit">
    <text evidence="2">Interacts (via C-terminus) with MPDZ and PATJ. May interact (via C-terminus) with MPP3, PRDX6, DLG4, DLG1, CASK, APBA1 and MAGI2. Interacts with GRM2 and DRD2; this may affect signaling.</text>
</comment>
<comment type="subcellular location">
    <subcellularLocation>
        <location evidence="2">Cell membrane</location>
        <topology evidence="2">Multi-pass membrane protein</topology>
    </subcellularLocation>
    <subcellularLocation>
        <location evidence="3">Cell projection</location>
        <location evidence="3">Dendrite</location>
    </subcellularLocation>
    <subcellularLocation>
        <location evidence="1">Cell projection</location>
        <location evidence="1">Axon</location>
    </subcellularLocation>
    <subcellularLocation>
        <location evidence="1">Cytoplasmic vesicle</location>
    </subcellularLocation>
    <subcellularLocation>
        <location evidence="1">Membrane</location>
        <location evidence="1">Caveola</location>
    </subcellularLocation>
    <subcellularLocation>
        <location evidence="1">Presynapse</location>
    </subcellularLocation>
</comment>
<comment type="domain">
    <text evidence="2">The PDZ domain-binding motif is involved in the interaction with PATJ, CASK, APBA1, DLG1 and DLG4.</text>
</comment>
<comment type="similarity">
    <text evidence="6">Belongs to the G-protein coupled receptor 1 family.</text>
</comment>
<sequence length="470" mass="52571">MDILCEENTSLSSTTNSLMQLHADTRLYSTDFNSGEGNTSNAFNWTVDSENRTNLSCEGCLSPPCFSLLHLQEKNWSALLTAVVIILTIAGNILVIMAVSLEKKLQNATNYFLMSLAIADMLLGFLVMPVSTLTILYGYRWPLPSKLCAVWIYLDVLFSTASIMHLCAISLDRYVAIQNPIHHSRFNSRTKAFLKIIAVWTISVGISMPIPVFGLQDDSKVFKEGSCLLADENFVLIGSFVAFFIPLTIMVITYFLTIKSLQKEATLCVSDPGTRTKLASFSFLPQSSLSSEKLFQRSIHREPGSYGRRTMQSISNEQKACKVLGIVFFLFVVMWCPFFITNIMAVICKESCNRDVIEALLNVFVWIGYLSSAVNPLVYTLFNKTYRSAFSRYIQCQYKENKKPLQLILVNTIPALAYKSSQLQMGPKKNSKKDDKTTDNDCTMVALGKEHPEDAPADSSNTVNEKVSCV</sequence>
<organism>
    <name type="scientific">Bos taurus</name>
    <name type="common">Bovine</name>
    <dbReference type="NCBI Taxonomy" id="9913"/>
    <lineage>
        <taxon>Eukaryota</taxon>
        <taxon>Metazoa</taxon>
        <taxon>Chordata</taxon>
        <taxon>Craniata</taxon>
        <taxon>Vertebrata</taxon>
        <taxon>Euteleostomi</taxon>
        <taxon>Mammalia</taxon>
        <taxon>Eutheria</taxon>
        <taxon>Laurasiatheria</taxon>
        <taxon>Artiodactyla</taxon>
        <taxon>Ruminantia</taxon>
        <taxon>Pecora</taxon>
        <taxon>Bovidae</taxon>
        <taxon>Bovinae</taxon>
        <taxon>Bos</taxon>
    </lineage>
</organism>
<reference key="1">
    <citation type="submission" date="2003-09" db="EMBL/GenBank/DDBJ databases">
        <title>Expression of 5-HT2A during adipogenesis.</title>
        <authorList>
            <person name="Tahara K."/>
            <person name="Aso H."/>
            <person name="Yamasaki T."/>
            <person name="Yamaguchi T."/>
            <person name="Takano S."/>
        </authorList>
    </citation>
    <scope>NUCLEOTIDE SEQUENCE [MRNA]</scope>
    <source>
        <tissue>Adipose tissue</tissue>
    </source>
</reference>
<evidence type="ECO:0000250" key="1">
    <source>
        <dbReference type="UniProtKB" id="P14842"/>
    </source>
</evidence>
<evidence type="ECO:0000250" key="2">
    <source>
        <dbReference type="UniProtKB" id="P28223"/>
    </source>
</evidence>
<evidence type="ECO:0000250" key="3">
    <source>
        <dbReference type="UniProtKB" id="P35363"/>
    </source>
</evidence>
<evidence type="ECO:0000250" key="4">
    <source>
        <dbReference type="UniProtKB" id="P41595"/>
    </source>
</evidence>
<evidence type="ECO:0000255" key="5"/>
<evidence type="ECO:0000255" key="6">
    <source>
        <dbReference type="PROSITE-ProRule" id="PRU00521"/>
    </source>
</evidence>
<evidence type="ECO:0000256" key="7">
    <source>
        <dbReference type="SAM" id="MobiDB-lite"/>
    </source>
</evidence>
<gene>
    <name type="primary">HTR2A</name>
    <name type="synonym">5HTR2A</name>
</gene>
<protein>
    <recommendedName>
        <fullName>5-hydroxytryptamine receptor 2A</fullName>
        <shortName>5-HT-2</shortName>
        <shortName>5-HT-2A</shortName>
    </recommendedName>
    <alternativeName>
        <fullName>Serotonin receptor 2A</fullName>
    </alternativeName>
</protein>
<proteinExistence type="evidence at transcript level"/>
<keyword id="KW-0085">Behavior</keyword>
<keyword id="KW-1003">Cell membrane</keyword>
<keyword id="KW-0966">Cell projection</keyword>
<keyword id="KW-0968">Cytoplasmic vesicle</keyword>
<keyword id="KW-1015">Disulfide bond</keyword>
<keyword id="KW-0297">G-protein coupled receptor</keyword>
<keyword id="KW-0325">Glycoprotein</keyword>
<keyword id="KW-0472">Membrane</keyword>
<keyword id="KW-0597">Phosphoprotein</keyword>
<keyword id="KW-0675">Receptor</keyword>
<keyword id="KW-1185">Reference proteome</keyword>
<keyword id="KW-0770">Synapse</keyword>
<keyword id="KW-0807">Transducer</keyword>
<keyword id="KW-0812">Transmembrane</keyword>
<keyword id="KW-1133">Transmembrane helix</keyword>
<dbReference type="EMBL" id="AB119637">
    <property type="protein sequence ID" value="BAD12238.1"/>
    <property type="molecule type" value="mRNA"/>
</dbReference>
<dbReference type="RefSeq" id="NP_001001157.1">
    <property type="nucleotide sequence ID" value="NM_001001157.1"/>
</dbReference>
<dbReference type="SMR" id="Q75Z89"/>
<dbReference type="FunCoup" id="Q75Z89">
    <property type="interactions" value="777"/>
</dbReference>
<dbReference type="STRING" id="9913.ENSBTAP00000017943"/>
<dbReference type="BindingDB" id="Q75Z89"/>
<dbReference type="ChEMBL" id="CHEMBL3446"/>
<dbReference type="DrugCentral" id="Q75Z89"/>
<dbReference type="GlyCosmos" id="Q75Z89">
    <property type="glycosylation" value="1 site, No reported glycans"/>
</dbReference>
<dbReference type="GlyGen" id="Q75Z89">
    <property type="glycosylation" value="1 site"/>
</dbReference>
<dbReference type="PaxDb" id="9913-ENSBTAP00000017943"/>
<dbReference type="Ensembl" id="ENSBTAT00000017943.4">
    <property type="protein sequence ID" value="ENSBTAP00000017943.4"/>
    <property type="gene ID" value="ENSBTAG00000013498.4"/>
</dbReference>
<dbReference type="GeneID" id="407230"/>
<dbReference type="KEGG" id="bta:407230"/>
<dbReference type="CTD" id="3356"/>
<dbReference type="VGNC" id="VGNC:29996">
    <property type="gene designation" value="HTR2A"/>
</dbReference>
<dbReference type="eggNOG" id="KOG3656">
    <property type="taxonomic scope" value="Eukaryota"/>
</dbReference>
<dbReference type="GeneTree" id="ENSGT01050000244937"/>
<dbReference type="HOGENOM" id="CLU_009579_11_3_1"/>
<dbReference type="InParanoid" id="Q75Z89"/>
<dbReference type="OrthoDB" id="420518at2759"/>
<dbReference type="TreeFam" id="TF316350"/>
<dbReference type="Proteomes" id="UP000009136">
    <property type="component" value="Chromosome 12"/>
</dbReference>
<dbReference type="GO" id="GO:0030424">
    <property type="term" value="C:axon"/>
    <property type="evidence" value="ECO:0007669"/>
    <property type="project" value="UniProtKB-SubCell"/>
</dbReference>
<dbReference type="GO" id="GO:0005901">
    <property type="term" value="C:caveola"/>
    <property type="evidence" value="ECO:0007669"/>
    <property type="project" value="UniProtKB-SubCell"/>
</dbReference>
<dbReference type="GO" id="GO:0031410">
    <property type="term" value="C:cytoplasmic vesicle"/>
    <property type="evidence" value="ECO:0007669"/>
    <property type="project" value="UniProtKB-KW"/>
</dbReference>
<dbReference type="GO" id="GO:0030425">
    <property type="term" value="C:dendrite"/>
    <property type="evidence" value="ECO:0000318"/>
    <property type="project" value="GO_Central"/>
</dbReference>
<dbReference type="GO" id="GO:0098666">
    <property type="term" value="C:G protein-coupled serotonin receptor complex"/>
    <property type="evidence" value="ECO:0007669"/>
    <property type="project" value="Ensembl"/>
</dbReference>
<dbReference type="GO" id="GO:0005886">
    <property type="term" value="C:plasma membrane"/>
    <property type="evidence" value="ECO:0000318"/>
    <property type="project" value="GO_Central"/>
</dbReference>
<dbReference type="GO" id="GO:0098793">
    <property type="term" value="C:presynapse"/>
    <property type="evidence" value="ECO:0007669"/>
    <property type="project" value="UniProtKB-SubCell"/>
</dbReference>
<dbReference type="GO" id="GO:0071886">
    <property type="term" value="F:1-(4-iodo-2,5-dimethoxyphenyl)propan-2-amine binding"/>
    <property type="evidence" value="ECO:0007669"/>
    <property type="project" value="Ensembl"/>
</dbReference>
<dbReference type="GO" id="GO:0004993">
    <property type="term" value="F:G protein-coupled serotonin receptor activity"/>
    <property type="evidence" value="ECO:0000318"/>
    <property type="project" value="GO_Central"/>
</dbReference>
<dbReference type="GO" id="GO:0001587">
    <property type="term" value="F:Gq/11-coupled serotonin receptor activity"/>
    <property type="evidence" value="ECO:0007669"/>
    <property type="project" value="Ensembl"/>
</dbReference>
<dbReference type="GO" id="GO:0042802">
    <property type="term" value="F:identical protein binding"/>
    <property type="evidence" value="ECO:0007669"/>
    <property type="project" value="Ensembl"/>
</dbReference>
<dbReference type="GO" id="GO:0030594">
    <property type="term" value="F:neurotransmitter receptor activity"/>
    <property type="evidence" value="ECO:0000318"/>
    <property type="project" value="GO_Central"/>
</dbReference>
<dbReference type="GO" id="GO:0030296">
    <property type="term" value="F:protein tyrosine kinase activator activity"/>
    <property type="evidence" value="ECO:0007669"/>
    <property type="project" value="Ensembl"/>
</dbReference>
<dbReference type="GO" id="GO:0051378">
    <property type="term" value="F:serotonin binding"/>
    <property type="evidence" value="ECO:0007669"/>
    <property type="project" value="Ensembl"/>
</dbReference>
<dbReference type="GO" id="GO:0099589">
    <property type="term" value="F:serotonin receptor activity"/>
    <property type="evidence" value="ECO:0007669"/>
    <property type="project" value="Ensembl"/>
</dbReference>
<dbReference type="GO" id="GO:0007268">
    <property type="term" value="P:chemical synaptic transmission"/>
    <property type="evidence" value="ECO:0000318"/>
    <property type="project" value="GO_Central"/>
</dbReference>
<dbReference type="GO" id="GO:0007187">
    <property type="term" value="P:G protein-coupled receptor signaling pathway, coupled to cyclic nucleotide second messenger"/>
    <property type="evidence" value="ECO:0000318"/>
    <property type="project" value="GO_Central"/>
</dbReference>
<dbReference type="GO" id="GO:0006096">
    <property type="term" value="P:glycolytic process"/>
    <property type="evidence" value="ECO:0007669"/>
    <property type="project" value="Ensembl"/>
</dbReference>
<dbReference type="GO" id="GO:0006874">
    <property type="term" value="P:intracellular calcium ion homeostasis"/>
    <property type="evidence" value="ECO:0007669"/>
    <property type="project" value="Ensembl"/>
</dbReference>
<dbReference type="GO" id="GO:0007208">
    <property type="term" value="P:phospholipase C-activating serotonin receptor signaling pathway"/>
    <property type="evidence" value="ECO:0000318"/>
    <property type="project" value="GO_Central"/>
</dbReference>
<dbReference type="GO" id="GO:0070374">
    <property type="term" value="P:positive regulation of ERK1 and ERK2 cascade"/>
    <property type="evidence" value="ECO:0007669"/>
    <property type="project" value="Ensembl"/>
</dbReference>
<dbReference type="GO" id="GO:0045600">
    <property type="term" value="P:positive regulation of fat cell differentiation"/>
    <property type="evidence" value="ECO:0007669"/>
    <property type="project" value="Ensembl"/>
</dbReference>
<dbReference type="GO" id="GO:0045821">
    <property type="term" value="P:positive regulation of glycolytic process"/>
    <property type="evidence" value="ECO:0007669"/>
    <property type="project" value="Ensembl"/>
</dbReference>
<dbReference type="GO" id="GO:0010513">
    <property type="term" value="P:positive regulation of phosphatidylinositol biosynthetic process"/>
    <property type="evidence" value="ECO:0007669"/>
    <property type="project" value="Ensembl"/>
</dbReference>
<dbReference type="GO" id="GO:0044380">
    <property type="term" value="P:protein localization to cytoskeleton"/>
    <property type="evidence" value="ECO:0007669"/>
    <property type="project" value="Ensembl"/>
</dbReference>
<dbReference type="GO" id="GO:0051209">
    <property type="term" value="P:release of sequestered calcium ion into cytosol"/>
    <property type="evidence" value="ECO:0000318"/>
    <property type="project" value="GO_Central"/>
</dbReference>
<dbReference type="GO" id="GO:0009410">
    <property type="term" value="P:response to xenobiotic stimulus"/>
    <property type="evidence" value="ECO:0000318"/>
    <property type="project" value="GO_Central"/>
</dbReference>
<dbReference type="GO" id="GO:0007210">
    <property type="term" value="P:serotonin receptor signaling pathway"/>
    <property type="evidence" value="ECO:0000318"/>
    <property type="project" value="GO_Central"/>
</dbReference>
<dbReference type="CDD" id="cd15304">
    <property type="entry name" value="7tmA_5-HT2A"/>
    <property type="match status" value="1"/>
</dbReference>
<dbReference type="Gene3D" id="1.20.1070.10">
    <property type="entry name" value="Rhodopsin 7-helix transmembrane proteins"/>
    <property type="match status" value="1"/>
</dbReference>
<dbReference type="InterPro" id="IPR000455">
    <property type="entry name" value="5HT2A_rcpt"/>
</dbReference>
<dbReference type="InterPro" id="IPR002231">
    <property type="entry name" value="5HT_rcpt"/>
</dbReference>
<dbReference type="InterPro" id="IPR000276">
    <property type="entry name" value="GPCR_Rhodpsn"/>
</dbReference>
<dbReference type="InterPro" id="IPR017452">
    <property type="entry name" value="GPCR_Rhodpsn_7TM"/>
</dbReference>
<dbReference type="PANTHER" id="PTHR24247">
    <property type="entry name" value="5-HYDROXYTRYPTAMINE RECEPTOR"/>
    <property type="match status" value="1"/>
</dbReference>
<dbReference type="PANTHER" id="PTHR24247:SF30">
    <property type="entry name" value="5-HYDROXYTRYPTAMINE RECEPTOR 2A"/>
    <property type="match status" value="1"/>
</dbReference>
<dbReference type="Pfam" id="PF00001">
    <property type="entry name" value="7tm_1"/>
    <property type="match status" value="1"/>
</dbReference>
<dbReference type="PRINTS" id="PR00516">
    <property type="entry name" value="5HT2ARECEPTR"/>
</dbReference>
<dbReference type="PRINTS" id="PR01101">
    <property type="entry name" value="5HTRECEPTOR"/>
</dbReference>
<dbReference type="PRINTS" id="PR00237">
    <property type="entry name" value="GPCRRHODOPSN"/>
</dbReference>
<dbReference type="SMART" id="SM01381">
    <property type="entry name" value="7TM_GPCR_Srsx"/>
    <property type="match status" value="1"/>
</dbReference>
<dbReference type="SUPFAM" id="SSF81321">
    <property type="entry name" value="Family A G protein-coupled receptor-like"/>
    <property type="match status" value="1"/>
</dbReference>
<dbReference type="PROSITE" id="PS00237">
    <property type="entry name" value="G_PROTEIN_RECEP_F1_1"/>
    <property type="match status" value="1"/>
</dbReference>
<dbReference type="PROSITE" id="PS50262">
    <property type="entry name" value="G_PROTEIN_RECEP_F1_2"/>
    <property type="match status" value="1"/>
</dbReference>
<name>5HT2A_BOVIN</name>
<feature type="chain" id="PRO_0000068942" description="5-hydroxytryptamine receptor 2A">
    <location>
        <begin position="1"/>
        <end position="470"/>
    </location>
</feature>
<feature type="topological domain" description="Extracellular" evidence="2">
    <location>
        <begin position="1"/>
        <end position="80"/>
    </location>
</feature>
<feature type="transmembrane region" description="Helical; Name=1" evidence="2">
    <location>
        <begin position="81"/>
        <end position="97"/>
    </location>
</feature>
<feature type="topological domain" description="Cytoplasmic" evidence="2">
    <location>
        <begin position="98"/>
        <end position="111"/>
    </location>
</feature>
<feature type="transmembrane region" description="Helical; Name=2" evidence="2">
    <location>
        <begin position="112"/>
        <end position="137"/>
    </location>
</feature>
<feature type="topological domain" description="Extracellular" evidence="2">
    <location>
        <begin position="138"/>
        <end position="146"/>
    </location>
</feature>
<feature type="transmembrane region" description="Helical; Name=3" evidence="2">
    <location>
        <begin position="147"/>
        <end position="171"/>
    </location>
</feature>
<feature type="topological domain" description="Cytoplasmic" evidence="2">
    <location>
        <begin position="172"/>
        <end position="191"/>
    </location>
</feature>
<feature type="transmembrane region" description="Helical; Name=4" evidence="2">
    <location>
        <begin position="192"/>
        <end position="215"/>
    </location>
</feature>
<feature type="topological domain" description="Extracellular" evidence="2">
    <location>
        <begin position="216"/>
        <end position="232"/>
    </location>
</feature>
<feature type="transmembrane region" description="Helical; Name=5" evidence="2">
    <location>
        <begin position="233"/>
        <end position="258"/>
    </location>
</feature>
<feature type="topological domain" description="Cytoplasmic" evidence="2">
    <location>
        <begin position="259"/>
        <end position="321"/>
    </location>
</feature>
<feature type="transmembrane region" description="Helical; Name=6" evidence="2">
    <location>
        <begin position="322"/>
        <end position="347"/>
    </location>
</feature>
<feature type="topological domain" description="Extracellular" evidence="2">
    <location>
        <begin position="348"/>
        <end position="355"/>
    </location>
</feature>
<feature type="transmembrane region" description="Helical; Name=7" evidence="2">
    <location>
        <begin position="356"/>
        <end position="381"/>
    </location>
</feature>
<feature type="topological domain" description="Cytoplasmic" evidence="2">
    <location>
        <begin position="382"/>
        <end position="470"/>
    </location>
</feature>
<feature type="region of interest" description="Disordered" evidence="7">
    <location>
        <begin position="424"/>
        <end position="470"/>
    </location>
</feature>
<feature type="short sequence motif" description="DRY motif; important for ligand-induced conformation changes" evidence="4">
    <location>
        <begin position="172"/>
        <end position="174"/>
    </location>
</feature>
<feature type="short sequence motif" description="NPxxY motif; important for ligand-induced conformation changes and signaling" evidence="4">
    <location>
        <begin position="375"/>
        <end position="379"/>
    </location>
</feature>
<feature type="short sequence motif" description="PDZ-binding" evidence="2">
    <location>
        <begin position="468"/>
        <end position="470"/>
    </location>
</feature>
<feature type="compositionally biased region" description="Polar residues" evidence="7">
    <location>
        <begin position="458"/>
        <end position="470"/>
    </location>
</feature>
<feature type="binding site" evidence="2">
    <location>
        <position position="155"/>
    </location>
    <ligand>
        <name>serotonin</name>
        <dbReference type="ChEBI" id="CHEBI:350546"/>
    </ligand>
</feature>
<feature type="binding site" evidence="2">
    <location>
        <position position="342"/>
    </location>
    <ligand>
        <name>serotonin</name>
        <dbReference type="ChEBI" id="CHEBI:350546"/>
    </ligand>
</feature>
<feature type="site" description="Hydrophobic barrier that decreases the speed of ligand binding and dissociation" evidence="2">
    <location>
        <position position="229"/>
    </location>
</feature>
<feature type="modified residue" description="Phosphoserine" evidence="2">
    <location>
        <position position="280"/>
    </location>
</feature>
<feature type="glycosylation site" description="N-linked (GlcNAc...) asparagine" evidence="5">
    <location>
        <position position="38"/>
    </location>
</feature>
<feature type="disulfide bond" evidence="6">
    <location>
        <begin position="148"/>
        <end position="227"/>
    </location>
</feature>
<feature type="disulfide bond" evidence="6">
    <location>
        <begin position="348"/>
        <end position="352"/>
    </location>
</feature>
<accession>Q75Z89</accession>